<keyword id="KW-0001">2Fe-2S</keyword>
<keyword id="KW-0997">Cell inner membrane</keyword>
<keyword id="KW-1003">Cell membrane</keyword>
<keyword id="KW-0274">FAD</keyword>
<keyword id="KW-0285">Flavoprotein</keyword>
<keyword id="KW-0406">Ion transport</keyword>
<keyword id="KW-0408">Iron</keyword>
<keyword id="KW-0411">Iron-sulfur</keyword>
<keyword id="KW-0472">Membrane</keyword>
<keyword id="KW-0479">Metal-binding</keyword>
<keyword id="KW-0520">NAD</keyword>
<keyword id="KW-1185">Reference proteome</keyword>
<keyword id="KW-0915">Sodium</keyword>
<keyword id="KW-0739">Sodium transport</keyword>
<keyword id="KW-1278">Translocase</keyword>
<keyword id="KW-0812">Transmembrane</keyword>
<keyword id="KW-1133">Transmembrane helix</keyword>
<keyword id="KW-0813">Transport</keyword>
<keyword id="KW-0830">Ubiquinone</keyword>
<name>NQRF_PSYA2</name>
<comment type="function">
    <text evidence="1">NQR complex catalyzes the reduction of ubiquinone-1 to ubiquinol by two successive reactions, coupled with the transport of Na(+) ions from the cytoplasm to the periplasm. The first step is catalyzed by NqrF, which accepts electrons from NADH and reduces ubiquinone-1 to ubisemiquinone by a one-electron transfer pathway.</text>
</comment>
<comment type="catalytic activity">
    <reaction evidence="1">
        <text>a ubiquinone + n Na(+)(in) + NADH + H(+) = a ubiquinol + n Na(+)(out) + NAD(+)</text>
        <dbReference type="Rhea" id="RHEA:47748"/>
        <dbReference type="Rhea" id="RHEA-COMP:9565"/>
        <dbReference type="Rhea" id="RHEA-COMP:9566"/>
        <dbReference type="ChEBI" id="CHEBI:15378"/>
        <dbReference type="ChEBI" id="CHEBI:16389"/>
        <dbReference type="ChEBI" id="CHEBI:17976"/>
        <dbReference type="ChEBI" id="CHEBI:29101"/>
        <dbReference type="ChEBI" id="CHEBI:57540"/>
        <dbReference type="ChEBI" id="CHEBI:57945"/>
        <dbReference type="EC" id="7.2.1.1"/>
    </reaction>
</comment>
<comment type="cofactor">
    <cofactor evidence="1">
        <name>[2Fe-2S] cluster</name>
        <dbReference type="ChEBI" id="CHEBI:190135"/>
    </cofactor>
    <text evidence="1">Binds 1 [2Fe-2S] cluster.</text>
</comment>
<comment type="cofactor">
    <cofactor evidence="1">
        <name>FAD</name>
        <dbReference type="ChEBI" id="CHEBI:57692"/>
    </cofactor>
</comment>
<comment type="subunit">
    <text evidence="1">Composed of six subunits; NqrA, NqrB, NqrC, NqrD, NqrE and NqrF.</text>
</comment>
<comment type="subcellular location">
    <subcellularLocation>
        <location evidence="1">Cell inner membrane</location>
        <topology evidence="1">Single-pass membrane protein</topology>
    </subcellularLocation>
</comment>
<comment type="similarity">
    <text evidence="1">Belongs to the NqrF family.</text>
</comment>
<proteinExistence type="inferred from homology"/>
<gene>
    <name evidence="1" type="primary">nqrF</name>
    <name type="ordered locus">Psyc_2109</name>
</gene>
<accession>Q4FPV2</accession>
<reference key="1">
    <citation type="journal article" date="2010" name="Appl. Environ. Microbiol.">
        <title>The genome sequence of Psychrobacter arcticus 273-4, a psychroactive Siberian permafrost bacterium, reveals mechanisms for adaptation to low-temperature growth.</title>
        <authorList>
            <person name="Ayala-del-Rio H.L."/>
            <person name="Chain P.S."/>
            <person name="Grzymski J.J."/>
            <person name="Ponder M.A."/>
            <person name="Ivanova N."/>
            <person name="Bergholz P.W."/>
            <person name="Di Bartolo G."/>
            <person name="Hauser L."/>
            <person name="Land M."/>
            <person name="Bakermans C."/>
            <person name="Rodrigues D."/>
            <person name="Klappenbach J."/>
            <person name="Zarka D."/>
            <person name="Larimer F."/>
            <person name="Richardson P."/>
            <person name="Murray A."/>
            <person name="Thomashow M."/>
            <person name="Tiedje J.M."/>
        </authorList>
    </citation>
    <scope>NUCLEOTIDE SEQUENCE [LARGE SCALE GENOMIC DNA]</scope>
    <source>
        <strain>DSM 17307 / VKM B-2377 / 273-4</strain>
    </source>
</reference>
<dbReference type="EC" id="7.2.1.1" evidence="1"/>
<dbReference type="EMBL" id="CP000082">
    <property type="protein sequence ID" value="AAZ19956.1"/>
    <property type="molecule type" value="Genomic_DNA"/>
</dbReference>
<dbReference type="RefSeq" id="WP_011281362.1">
    <property type="nucleotide sequence ID" value="NC_007204.1"/>
</dbReference>
<dbReference type="SMR" id="Q4FPV2"/>
<dbReference type="STRING" id="259536.Psyc_2109"/>
<dbReference type="KEGG" id="par:Psyc_2109"/>
<dbReference type="eggNOG" id="COG2871">
    <property type="taxonomic scope" value="Bacteria"/>
</dbReference>
<dbReference type="HOGENOM" id="CLU_003827_7_2_6"/>
<dbReference type="OrthoDB" id="9806195at2"/>
<dbReference type="Proteomes" id="UP000000546">
    <property type="component" value="Chromosome"/>
</dbReference>
<dbReference type="GO" id="GO:0005886">
    <property type="term" value="C:plasma membrane"/>
    <property type="evidence" value="ECO:0007669"/>
    <property type="project" value="UniProtKB-SubCell"/>
</dbReference>
<dbReference type="GO" id="GO:0051537">
    <property type="term" value="F:2 iron, 2 sulfur cluster binding"/>
    <property type="evidence" value="ECO:0007669"/>
    <property type="project" value="UniProtKB-KW"/>
</dbReference>
<dbReference type="GO" id="GO:0009055">
    <property type="term" value="F:electron transfer activity"/>
    <property type="evidence" value="ECO:0007669"/>
    <property type="project" value="UniProtKB-UniRule"/>
</dbReference>
<dbReference type="GO" id="GO:0046872">
    <property type="term" value="F:metal ion binding"/>
    <property type="evidence" value="ECO:0007669"/>
    <property type="project" value="UniProtKB-KW"/>
</dbReference>
<dbReference type="GO" id="GO:0016655">
    <property type="term" value="F:oxidoreductase activity, acting on NAD(P)H, quinone or similar compound as acceptor"/>
    <property type="evidence" value="ECO:0007669"/>
    <property type="project" value="InterPro"/>
</dbReference>
<dbReference type="GO" id="GO:0006814">
    <property type="term" value="P:sodium ion transport"/>
    <property type="evidence" value="ECO:0007669"/>
    <property type="project" value="UniProtKB-UniRule"/>
</dbReference>
<dbReference type="CDD" id="cd00207">
    <property type="entry name" value="fer2"/>
    <property type="match status" value="1"/>
</dbReference>
<dbReference type="CDD" id="cd06188">
    <property type="entry name" value="NADH_quinone_reductase"/>
    <property type="match status" value="1"/>
</dbReference>
<dbReference type="FunFam" id="3.40.50.80:FF:000014">
    <property type="entry name" value="Na(+)-translocating NADH-quinone reductase subunit F"/>
    <property type="match status" value="1"/>
</dbReference>
<dbReference type="Gene3D" id="3.10.20.30">
    <property type="match status" value="1"/>
</dbReference>
<dbReference type="Gene3D" id="3.40.50.80">
    <property type="entry name" value="Nucleotide-binding domain of ferredoxin-NADP reductase (FNR) module"/>
    <property type="match status" value="1"/>
</dbReference>
<dbReference type="Gene3D" id="2.40.30.10">
    <property type="entry name" value="Translation factors"/>
    <property type="match status" value="1"/>
</dbReference>
<dbReference type="HAMAP" id="MF_00430">
    <property type="entry name" value="NqrF"/>
    <property type="match status" value="1"/>
</dbReference>
<dbReference type="InterPro" id="IPR036010">
    <property type="entry name" value="2Fe-2S_ferredoxin-like_sf"/>
</dbReference>
<dbReference type="InterPro" id="IPR001041">
    <property type="entry name" value="2Fe-2S_ferredoxin-type"/>
</dbReference>
<dbReference type="InterPro" id="IPR012675">
    <property type="entry name" value="Beta-grasp_dom_sf"/>
</dbReference>
<dbReference type="InterPro" id="IPR008333">
    <property type="entry name" value="Cbr1-like_FAD-bd_dom"/>
</dbReference>
<dbReference type="InterPro" id="IPR017927">
    <property type="entry name" value="FAD-bd_FR_type"/>
</dbReference>
<dbReference type="InterPro" id="IPR039261">
    <property type="entry name" value="FNR_nucleotide-bd"/>
</dbReference>
<dbReference type="InterPro" id="IPR010205">
    <property type="entry name" value="NqrF"/>
</dbReference>
<dbReference type="InterPro" id="IPR001433">
    <property type="entry name" value="OxRdtase_FAD/NAD-bd"/>
</dbReference>
<dbReference type="InterPro" id="IPR017938">
    <property type="entry name" value="Riboflavin_synthase-like_b-brl"/>
</dbReference>
<dbReference type="NCBIfam" id="TIGR01941">
    <property type="entry name" value="nqrF"/>
    <property type="match status" value="1"/>
</dbReference>
<dbReference type="PANTHER" id="PTHR43644">
    <property type="entry name" value="NA(+)-TRANSLOCATING NADH-QUINONE REDUCTASE SUBUNIT"/>
    <property type="match status" value="1"/>
</dbReference>
<dbReference type="PANTHER" id="PTHR43644:SF1">
    <property type="entry name" value="NAD(P)H-FLAVIN REDUCTASE"/>
    <property type="match status" value="1"/>
</dbReference>
<dbReference type="Pfam" id="PF00970">
    <property type="entry name" value="FAD_binding_6"/>
    <property type="match status" value="1"/>
</dbReference>
<dbReference type="Pfam" id="PF00111">
    <property type="entry name" value="Fer2"/>
    <property type="match status" value="1"/>
</dbReference>
<dbReference type="Pfam" id="PF00175">
    <property type="entry name" value="NAD_binding_1"/>
    <property type="match status" value="1"/>
</dbReference>
<dbReference type="PIRSF" id="PIRSF000044">
    <property type="entry name" value="Cis_Diol_DH_RD"/>
    <property type="match status" value="1"/>
</dbReference>
<dbReference type="SUPFAM" id="SSF54292">
    <property type="entry name" value="2Fe-2S ferredoxin-like"/>
    <property type="match status" value="1"/>
</dbReference>
<dbReference type="SUPFAM" id="SSF52343">
    <property type="entry name" value="Ferredoxin reductase-like, C-terminal NADP-linked domain"/>
    <property type="match status" value="1"/>
</dbReference>
<dbReference type="SUPFAM" id="SSF63380">
    <property type="entry name" value="Riboflavin synthase domain-like"/>
    <property type="match status" value="1"/>
</dbReference>
<dbReference type="PROSITE" id="PS51085">
    <property type="entry name" value="2FE2S_FER_2"/>
    <property type="match status" value="1"/>
</dbReference>
<dbReference type="PROSITE" id="PS51384">
    <property type="entry name" value="FAD_FR"/>
    <property type="match status" value="1"/>
</dbReference>
<sequence>MDYFTAIGGVAMFTLIIMSFVAIILAARSRLVSSGDVTIHINDNPDNDVVTPAGGKLLQTLASEGIFLSSACGGGGTCAQCRCRVIEGGGSILPTEEGYFTQGEIRNHMRLACQVAVKQDMKIEIDPEFFDVQKWECEVISNDNVATFIKELVLKIPEGEEVNFRAGGYVQLEAPPHEVHYKDFDIAEEYQDDWNNFGIFKYVSKVDEPVIRAYSMANYPDEKGLIKFNIRIASPPPRGPDGIPPGKMSSWTFSLKPGDKVTVSGPYGEFFAKKTEAEMIFVGGGAGMAPMRSHIFDQLKRLNSDRKISFWYGARSIREMFYVEDYDQLEADFANFQWHVALSDPQPEDNWTGYTGFIHNVLLEEYLKGHPNPEDCEYYMCGPPMMNAAVIDMLHSLGVEDENIMLDDFGG</sequence>
<feature type="chain" id="PRO_1000080591" description="Na(+)-translocating NADH-quinone reductase subunit F">
    <location>
        <begin position="1"/>
        <end position="411"/>
    </location>
</feature>
<feature type="transmembrane region" description="Helical" evidence="1">
    <location>
        <begin position="6"/>
        <end position="26"/>
    </location>
</feature>
<feature type="domain" description="2Fe-2S ferredoxin-type" evidence="1">
    <location>
        <begin position="35"/>
        <end position="129"/>
    </location>
</feature>
<feature type="domain" description="FAD-binding FR-type" evidence="1">
    <location>
        <begin position="132"/>
        <end position="273"/>
    </location>
</feature>
<feature type="binding site" evidence="1">
    <location>
        <position position="72"/>
    </location>
    <ligand>
        <name>[2Fe-2S] cluster</name>
        <dbReference type="ChEBI" id="CHEBI:190135"/>
    </ligand>
</feature>
<feature type="binding site" evidence="1">
    <location>
        <position position="78"/>
    </location>
    <ligand>
        <name>[2Fe-2S] cluster</name>
        <dbReference type="ChEBI" id="CHEBI:190135"/>
    </ligand>
</feature>
<feature type="binding site" evidence="1">
    <location>
        <position position="81"/>
    </location>
    <ligand>
        <name>[2Fe-2S] cluster</name>
        <dbReference type="ChEBI" id="CHEBI:190135"/>
    </ligand>
</feature>
<feature type="binding site" evidence="1">
    <location>
        <position position="113"/>
    </location>
    <ligand>
        <name>[2Fe-2S] cluster</name>
        <dbReference type="ChEBI" id="CHEBI:190135"/>
    </ligand>
</feature>
<organism>
    <name type="scientific">Psychrobacter arcticus (strain DSM 17307 / VKM B-2377 / 273-4)</name>
    <dbReference type="NCBI Taxonomy" id="259536"/>
    <lineage>
        <taxon>Bacteria</taxon>
        <taxon>Pseudomonadati</taxon>
        <taxon>Pseudomonadota</taxon>
        <taxon>Gammaproteobacteria</taxon>
        <taxon>Moraxellales</taxon>
        <taxon>Moraxellaceae</taxon>
        <taxon>Psychrobacter</taxon>
    </lineage>
</organism>
<evidence type="ECO:0000255" key="1">
    <source>
        <dbReference type="HAMAP-Rule" id="MF_00430"/>
    </source>
</evidence>
<protein>
    <recommendedName>
        <fullName evidence="1">Na(+)-translocating NADH-quinone reductase subunit F</fullName>
        <shortName evidence="1">Na(+)-NQR subunit F</shortName>
        <shortName evidence="1">Na(+)-translocating NQR subunit F</shortName>
        <ecNumber evidence="1">7.2.1.1</ecNumber>
    </recommendedName>
    <alternativeName>
        <fullName evidence="1">NQR complex subunit F</fullName>
    </alternativeName>
    <alternativeName>
        <fullName evidence="1">NQR-1 subunit F</fullName>
    </alternativeName>
</protein>